<dbReference type="EC" id="3.5.1.5" evidence="1"/>
<dbReference type="EMBL" id="CP000117">
    <property type="protein sequence ID" value="ABA23224.1"/>
    <property type="molecule type" value="Genomic_DNA"/>
</dbReference>
<dbReference type="SMR" id="Q3M712"/>
<dbReference type="STRING" id="240292.Ava_3618"/>
<dbReference type="MEROPS" id="M38.982"/>
<dbReference type="KEGG" id="ava:Ava_3618"/>
<dbReference type="eggNOG" id="COG0804">
    <property type="taxonomic scope" value="Bacteria"/>
</dbReference>
<dbReference type="HOGENOM" id="CLU_000980_0_0_3"/>
<dbReference type="UniPathway" id="UPA00258">
    <property type="reaction ID" value="UER00370"/>
</dbReference>
<dbReference type="Proteomes" id="UP000002533">
    <property type="component" value="Chromosome"/>
</dbReference>
<dbReference type="GO" id="GO:0005737">
    <property type="term" value="C:cytoplasm"/>
    <property type="evidence" value="ECO:0007669"/>
    <property type="project" value="UniProtKB-SubCell"/>
</dbReference>
<dbReference type="GO" id="GO:0016151">
    <property type="term" value="F:nickel cation binding"/>
    <property type="evidence" value="ECO:0007669"/>
    <property type="project" value="UniProtKB-UniRule"/>
</dbReference>
<dbReference type="GO" id="GO:0009039">
    <property type="term" value="F:urease activity"/>
    <property type="evidence" value="ECO:0007669"/>
    <property type="project" value="UniProtKB-UniRule"/>
</dbReference>
<dbReference type="GO" id="GO:0043419">
    <property type="term" value="P:urea catabolic process"/>
    <property type="evidence" value="ECO:0007669"/>
    <property type="project" value="UniProtKB-UniRule"/>
</dbReference>
<dbReference type="CDD" id="cd00375">
    <property type="entry name" value="Urease_alpha"/>
    <property type="match status" value="1"/>
</dbReference>
<dbReference type="Gene3D" id="3.20.20.140">
    <property type="entry name" value="Metal-dependent hydrolases"/>
    <property type="match status" value="1"/>
</dbReference>
<dbReference type="Gene3D" id="2.30.40.10">
    <property type="entry name" value="Urease, subunit C, domain 1"/>
    <property type="match status" value="1"/>
</dbReference>
<dbReference type="HAMAP" id="MF_01953">
    <property type="entry name" value="Urease_alpha"/>
    <property type="match status" value="1"/>
</dbReference>
<dbReference type="InterPro" id="IPR006680">
    <property type="entry name" value="Amidohydro-rel"/>
</dbReference>
<dbReference type="InterPro" id="IPR011059">
    <property type="entry name" value="Metal-dep_hydrolase_composite"/>
</dbReference>
<dbReference type="InterPro" id="IPR032466">
    <property type="entry name" value="Metal_Hydrolase"/>
</dbReference>
<dbReference type="InterPro" id="IPR011612">
    <property type="entry name" value="Urease_alpha_N_dom"/>
</dbReference>
<dbReference type="InterPro" id="IPR050112">
    <property type="entry name" value="Urease_alpha_subunit"/>
</dbReference>
<dbReference type="InterPro" id="IPR017950">
    <property type="entry name" value="Urease_AS"/>
</dbReference>
<dbReference type="InterPro" id="IPR005848">
    <property type="entry name" value="Urease_asu"/>
</dbReference>
<dbReference type="InterPro" id="IPR017951">
    <property type="entry name" value="Urease_asu_c"/>
</dbReference>
<dbReference type="InterPro" id="IPR029754">
    <property type="entry name" value="Urease_Ni-bd"/>
</dbReference>
<dbReference type="NCBIfam" id="NF009685">
    <property type="entry name" value="PRK13206.1"/>
    <property type="match status" value="1"/>
</dbReference>
<dbReference type="NCBIfam" id="NF009686">
    <property type="entry name" value="PRK13207.1"/>
    <property type="match status" value="1"/>
</dbReference>
<dbReference type="NCBIfam" id="TIGR01792">
    <property type="entry name" value="urease_alph"/>
    <property type="match status" value="1"/>
</dbReference>
<dbReference type="PANTHER" id="PTHR43440">
    <property type="entry name" value="UREASE"/>
    <property type="match status" value="1"/>
</dbReference>
<dbReference type="PANTHER" id="PTHR43440:SF1">
    <property type="entry name" value="UREASE"/>
    <property type="match status" value="1"/>
</dbReference>
<dbReference type="Pfam" id="PF01979">
    <property type="entry name" value="Amidohydro_1"/>
    <property type="match status" value="1"/>
</dbReference>
<dbReference type="Pfam" id="PF00449">
    <property type="entry name" value="Urease_alpha"/>
    <property type="match status" value="1"/>
</dbReference>
<dbReference type="PRINTS" id="PR01752">
    <property type="entry name" value="UREASE"/>
</dbReference>
<dbReference type="SUPFAM" id="SSF51338">
    <property type="entry name" value="Composite domain of metallo-dependent hydrolases"/>
    <property type="match status" value="1"/>
</dbReference>
<dbReference type="SUPFAM" id="SSF51556">
    <property type="entry name" value="Metallo-dependent hydrolases"/>
    <property type="match status" value="1"/>
</dbReference>
<dbReference type="PROSITE" id="PS01120">
    <property type="entry name" value="UREASE_1"/>
    <property type="match status" value="1"/>
</dbReference>
<dbReference type="PROSITE" id="PS00145">
    <property type="entry name" value="UREASE_2"/>
    <property type="match status" value="1"/>
</dbReference>
<dbReference type="PROSITE" id="PS51368">
    <property type="entry name" value="UREASE_3"/>
    <property type="match status" value="1"/>
</dbReference>
<organism>
    <name type="scientific">Trichormus variabilis (strain ATCC 29413 / PCC 7937)</name>
    <name type="common">Anabaena variabilis</name>
    <dbReference type="NCBI Taxonomy" id="240292"/>
    <lineage>
        <taxon>Bacteria</taxon>
        <taxon>Bacillati</taxon>
        <taxon>Cyanobacteriota</taxon>
        <taxon>Cyanophyceae</taxon>
        <taxon>Nostocales</taxon>
        <taxon>Nostocaceae</taxon>
        <taxon>Trichormus</taxon>
    </lineage>
</organism>
<protein>
    <recommendedName>
        <fullName evidence="1">Urease subunit alpha</fullName>
        <ecNumber evidence="1">3.5.1.5</ecNumber>
    </recommendedName>
    <alternativeName>
        <fullName evidence="1">Urea amidohydrolase subunit alpha</fullName>
    </alternativeName>
</protein>
<gene>
    <name evidence="1" type="primary">ureC</name>
    <name type="ordered locus">Ava_3618</name>
</gene>
<sequence>MPYRMSRQAYAETYGPTVGDRIRLADTELFIQVEQDFTTYGDEVKFGGGKVIRDGMGQSPIANADGAVDLVITNALILDWWGIVKADIGIKDGKIFKIGKAGNPYIQDHVDIIIGPGTEALAGEGMILTAGGIDTHIHFICPQQIEVAIASGITTMIGGGTGPATGTNATTCTPGPWNMYRMLQAADAFPMNLGFLGKGNASQPQGLTEQIFAGAIGLKLHEDWGTTPATIDTCLSVADEYDVQVAIHTDTLNEAGFVEDTIAAFKNRAIHTYHTEGAGGGHAPDIIKVCGQANVLPSSTNPTRPYTVNTLDEHLDMLMVCHHLDPAIAEDVAFAESRIRRETIAAEDILHDLGAFSMIASDSQAMGRVGEVIIRTWQTSHKMKVQRGSLAGDGKADNLRAKRYVAKYTINPAITHGISQYVGSVEAGKLADLCLWRPGFFGVKPEIVIKGGMIAWSQMGDANASIPTPQPVHMRPMFGSFAGARNATSLTFVSQAALERDIPQQLGLRKSAVAVSGTRQLTKQEMKLNDALPHIEVDPETYEVRADGELLTCEPATVLPMAQRYFLF</sequence>
<accession>Q3M712</accession>
<evidence type="ECO:0000255" key="1">
    <source>
        <dbReference type="HAMAP-Rule" id="MF_01953"/>
    </source>
</evidence>
<feature type="chain" id="PRO_0000239873" description="Urease subunit alpha">
    <location>
        <begin position="1"/>
        <end position="568"/>
    </location>
</feature>
<feature type="domain" description="Urease" evidence="1">
    <location>
        <begin position="131"/>
        <end position="568"/>
    </location>
</feature>
<feature type="active site" description="Proton donor" evidence="1">
    <location>
        <position position="322"/>
    </location>
</feature>
<feature type="binding site" evidence="1">
    <location>
        <position position="136"/>
    </location>
    <ligand>
        <name>Ni(2+)</name>
        <dbReference type="ChEBI" id="CHEBI:49786"/>
        <label>1</label>
    </ligand>
</feature>
<feature type="binding site" evidence="1">
    <location>
        <position position="138"/>
    </location>
    <ligand>
        <name>Ni(2+)</name>
        <dbReference type="ChEBI" id="CHEBI:49786"/>
        <label>1</label>
    </ligand>
</feature>
<feature type="binding site" description="via carbamate group" evidence="1">
    <location>
        <position position="219"/>
    </location>
    <ligand>
        <name>Ni(2+)</name>
        <dbReference type="ChEBI" id="CHEBI:49786"/>
        <label>1</label>
    </ligand>
</feature>
<feature type="binding site" description="via carbamate group" evidence="1">
    <location>
        <position position="219"/>
    </location>
    <ligand>
        <name>Ni(2+)</name>
        <dbReference type="ChEBI" id="CHEBI:49786"/>
        <label>2</label>
    </ligand>
</feature>
<feature type="binding site" evidence="1">
    <location>
        <position position="221"/>
    </location>
    <ligand>
        <name>substrate</name>
    </ligand>
</feature>
<feature type="binding site" evidence="1">
    <location>
        <position position="248"/>
    </location>
    <ligand>
        <name>Ni(2+)</name>
        <dbReference type="ChEBI" id="CHEBI:49786"/>
        <label>2</label>
    </ligand>
</feature>
<feature type="binding site" evidence="1">
    <location>
        <position position="274"/>
    </location>
    <ligand>
        <name>Ni(2+)</name>
        <dbReference type="ChEBI" id="CHEBI:49786"/>
        <label>2</label>
    </ligand>
</feature>
<feature type="binding site" evidence="1">
    <location>
        <position position="362"/>
    </location>
    <ligand>
        <name>Ni(2+)</name>
        <dbReference type="ChEBI" id="CHEBI:49786"/>
        <label>1</label>
    </ligand>
</feature>
<feature type="modified residue" description="N6-carboxylysine" evidence="1">
    <location>
        <position position="219"/>
    </location>
</feature>
<proteinExistence type="inferred from homology"/>
<name>URE1_TRIV2</name>
<reference key="1">
    <citation type="journal article" date="2014" name="Stand. Genomic Sci.">
        <title>Complete genome sequence of Anabaena variabilis ATCC 29413.</title>
        <authorList>
            <person name="Thiel T."/>
            <person name="Pratte B.S."/>
            <person name="Zhong J."/>
            <person name="Goodwin L."/>
            <person name="Copeland A."/>
            <person name="Lucas S."/>
            <person name="Han C."/>
            <person name="Pitluck S."/>
            <person name="Land M.L."/>
            <person name="Kyrpides N.C."/>
            <person name="Woyke T."/>
        </authorList>
    </citation>
    <scope>NUCLEOTIDE SEQUENCE [LARGE SCALE GENOMIC DNA]</scope>
    <source>
        <strain>ATCC 29413 / PCC 7937</strain>
    </source>
</reference>
<keyword id="KW-0963">Cytoplasm</keyword>
<keyword id="KW-0378">Hydrolase</keyword>
<keyword id="KW-0479">Metal-binding</keyword>
<keyword id="KW-0533">Nickel</keyword>
<comment type="catalytic activity">
    <reaction evidence="1">
        <text>urea + 2 H2O + H(+) = hydrogencarbonate + 2 NH4(+)</text>
        <dbReference type="Rhea" id="RHEA:20557"/>
        <dbReference type="ChEBI" id="CHEBI:15377"/>
        <dbReference type="ChEBI" id="CHEBI:15378"/>
        <dbReference type="ChEBI" id="CHEBI:16199"/>
        <dbReference type="ChEBI" id="CHEBI:17544"/>
        <dbReference type="ChEBI" id="CHEBI:28938"/>
        <dbReference type="EC" id="3.5.1.5"/>
    </reaction>
</comment>
<comment type="cofactor">
    <cofactor evidence="1">
        <name>Ni cation</name>
        <dbReference type="ChEBI" id="CHEBI:25516"/>
    </cofactor>
    <text evidence="1">Binds 2 nickel ions per subunit.</text>
</comment>
<comment type="pathway">
    <text evidence="1">Nitrogen metabolism; urea degradation; CO(2) and NH(3) from urea (urease route): step 1/1.</text>
</comment>
<comment type="subunit">
    <text evidence="1">Heterotrimer of UreA (gamma), UreB (beta) and UreC (alpha) subunits. Three heterotrimers associate to form the active enzyme.</text>
</comment>
<comment type="subcellular location">
    <subcellularLocation>
        <location evidence="1">Cytoplasm</location>
    </subcellularLocation>
</comment>
<comment type="PTM">
    <text evidence="1">Carboxylation allows a single lysine to coordinate two nickel ions.</text>
</comment>
<comment type="similarity">
    <text evidence="1">Belongs to the metallo-dependent hydrolases superfamily. Urease alpha subunit family.</text>
</comment>